<reference key="1">
    <citation type="journal article" date="1995" name="Mol. Endocrinol.">
        <title>Isolation of proteins that interact specifically with the retinoid X receptor: two novel orphan receptors.</title>
        <authorList>
            <person name="Seol W."/>
            <person name="Choi H.S."/>
            <person name="Moore D.D."/>
        </authorList>
    </citation>
    <scope>NUCLEOTIDE SEQUENCE [MRNA] (ISOFORMS 1 AND 2)</scope>
    <scope>INTERACTION WITH RXRA</scope>
    <source>
        <tissue>Liver</tissue>
    </source>
</reference>
<reference key="2">
    <citation type="journal article" date="2009" name="PLoS Biol.">
        <title>Lineage-specific biology revealed by a finished genome assembly of the mouse.</title>
        <authorList>
            <person name="Church D.M."/>
            <person name="Goodstadt L."/>
            <person name="Hillier L.W."/>
            <person name="Zody M.C."/>
            <person name="Goldstein S."/>
            <person name="She X."/>
            <person name="Bult C.J."/>
            <person name="Agarwala R."/>
            <person name="Cherry J.L."/>
            <person name="DiCuccio M."/>
            <person name="Hlavina W."/>
            <person name="Kapustin Y."/>
            <person name="Meric P."/>
            <person name="Maglott D."/>
            <person name="Birtle Z."/>
            <person name="Marques A.C."/>
            <person name="Graves T."/>
            <person name="Zhou S."/>
            <person name="Teague B."/>
            <person name="Potamousis K."/>
            <person name="Churas C."/>
            <person name="Place M."/>
            <person name="Herschleb J."/>
            <person name="Runnheim R."/>
            <person name="Forrest D."/>
            <person name="Amos-Landgraf J."/>
            <person name="Schwartz D.C."/>
            <person name="Cheng Z."/>
            <person name="Lindblad-Toh K."/>
            <person name="Eichler E.E."/>
            <person name="Ponting C.P."/>
        </authorList>
    </citation>
    <scope>NUCLEOTIDE SEQUENCE [LARGE SCALE GENOMIC DNA]</scope>
    <source>
        <strain>C57BL/6J</strain>
    </source>
</reference>
<reference key="3">
    <citation type="journal article" date="2004" name="Genome Res.">
        <title>The status, quality, and expansion of the NIH full-length cDNA project: the Mammalian Gene Collection (MGC).</title>
        <authorList>
            <consortium name="The MGC Project Team"/>
        </authorList>
    </citation>
    <scope>NUCLEOTIDE SEQUENCE [LARGE SCALE MRNA] (ISOFORM 2)</scope>
    <source>
        <tissue>Kidney</tissue>
    </source>
</reference>
<reference key="4">
    <citation type="journal article" date="2000" name="Cell">
        <title>Targeted disruption of the nuclear receptor FXR/BAR impairs bile acid and lipid homeostasis.</title>
        <authorList>
            <person name="Sinal C.J."/>
            <person name="Tohkin M."/>
            <person name="Miyata M."/>
            <person name="Ward J.M."/>
            <person name="Lambert G."/>
            <person name="Gonzalez F.J."/>
        </authorList>
    </citation>
    <scope>FUNCTION</scope>
    <scope>DISRUPTION PHENOTYPE</scope>
</reference>
<reference key="5">
    <citation type="journal article" date="2001" name="Mol. Endocrinol.">
        <title>Farnesoid X-activated receptor induces apolipoprotein C-II transcription: a molecular mechanism linking plasma triglyceride levels to bile acids.</title>
        <authorList>
            <person name="Kast H.R."/>
            <person name="Nguyen C.M."/>
            <person name="Sinal C.J."/>
            <person name="Jones S.A."/>
            <person name="Laffitte B.A."/>
            <person name="Reue K."/>
            <person name="Gonzalez F.J."/>
            <person name="Willson T.M."/>
            <person name="Edwards P.A."/>
        </authorList>
    </citation>
    <scope>FUNCTION IN LIPID HOMEOSTASIS</scope>
</reference>
<reference key="6">
    <citation type="journal article" date="2002" name="J. Biol. Chem.">
        <title>The amino acid residues asparagine 354 and isoleucine 372 of human farnesoid X receptor confer the receptor with high sensitivity to chenodeoxycholate.</title>
        <authorList>
            <person name="Cui J."/>
            <person name="Heard T.S."/>
            <person name="Yu J."/>
            <person name="Lo J.L."/>
            <person name="Huang L."/>
            <person name="Li Y."/>
            <person name="Schaeffer J.M."/>
            <person name="Wright S.D."/>
        </authorList>
    </citation>
    <scope>FUNCTION</scope>
    <scope>MUTAGENESIS OF LYS-370 AND VAL-388</scope>
</reference>
<reference key="7">
    <citation type="journal article" date="2002" name="J. Biol. Chem.">
        <title>Regulation of multidrug resistance-associated protein 2 (ABCC2) by the nuclear receptors pregnane X receptor, farnesoid X-activated receptor, and constitutive androstane receptor.</title>
        <authorList>
            <person name="Kast H.R."/>
            <person name="Goodwin B."/>
            <person name="Tarr P.T."/>
            <person name="Jones S.A."/>
            <person name="Anisfeld A.M."/>
            <person name="Stoltz C.M."/>
            <person name="Tontonoz P."/>
            <person name="Kliewer S."/>
            <person name="Willson T.M."/>
            <person name="Edwards P.A."/>
        </authorList>
    </citation>
    <scope>FUNCTION</scope>
</reference>
<reference key="8">
    <citation type="journal article" date="2003" name="Gastroenterology">
        <title>Farnesoid X receptor agonists suppress hepatic apolipoprotein CIII expression.</title>
        <authorList>
            <person name="Claudel T."/>
            <person name="Inoue Y."/>
            <person name="Barbier O."/>
            <person name="Duran-Sandoval D."/>
            <person name="Kosykh V."/>
            <person name="Fruchart J."/>
            <person name="Fruchart J.C."/>
            <person name="Gonzalez F.J."/>
            <person name="Staels B."/>
        </authorList>
    </citation>
    <scope>FUNCTION IN LIPID HOMEOSTASIS</scope>
</reference>
<reference key="9">
    <citation type="journal article" date="2003" name="J. Biol. Chem.">
        <title>Natural structural variants of the nuclear receptor farnesoid X receptor affect transcriptional activation.</title>
        <authorList>
            <person name="Zhang Y."/>
            <person name="Kast-Woelbern H.R."/>
            <person name="Edwards P.A."/>
        </authorList>
    </citation>
    <scope>FUNCTION</scope>
    <scope>ALTERNATIVE SPLICING</scope>
</reference>
<reference key="10">
    <citation type="journal article" date="2003" name="J. Biol. Chem.">
        <title>The farnesoid X-receptor is an essential regulator of cholesterol homeostasis.</title>
        <authorList>
            <person name="Lambert G."/>
            <person name="Amar M.J."/>
            <person name="Guo G."/>
            <person name="Brewer H.B. Jr."/>
            <person name="Gonzalez F.J."/>
            <person name="Sinal C.J."/>
        </authorList>
    </citation>
    <scope>FUNCTION IN LIPID HOMEOSTASIS</scope>
</reference>
<reference key="11">
    <citation type="journal article" date="2003" name="J. Biol. Chem.">
        <title>Syndecan-1 expression is regulated in an isoform-specific manner by the farnesoid-X receptor.</title>
        <authorList>
            <person name="Anisfeld A.M."/>
            <person name="Kast-Woelbern H.R."/>
            <person name="Meyer M.E."/>
            <person name="Jones S.A."/>
            <person name="Zhang Y."/>
            <person name="Williams K.J."/>
            <person name="Willson T."/>
            <person name="Edwards P.A."/>
        </authorList>
    </citation>
    <scope>FUNCTION IN LIPID HOMEOSTASIS</scope>
</reference>
<reference key="12">
    <citation type="journal article" date="2004" name="Genes Dev.">
        <title>Peroxisome proliferator-activated receptor-gamma coactivator 1alpha (PGC-1alpha) regulates triglyceride metabolism by activation of the nuclear receptor FXR.</title>
        <authorList>
            <person name="Zhang Y."/>
            <person name="Castellani L.W."/>
            <person name="Sinal C.J."/>
            <person name="Gonzalez F.J."/>
            <person name="Edwards P.A."/>
        </authorList>
    </citation>
    <scope>INTERACTION WITH PPARGC1A</scope>
</reference>
<reference key="13">
    <citation type="journal article" date="2004" name="J. Clin. Invest.">
        <title>Bile acids lower triglyceride levels via a pathway involving FXR, SHP, and SREBP-1c.</title>
        <authorList>
            <person name="Watanabe M."/>
            <person name="Houten S.M."/>
            <person name="Wang L."/>
            <person name="Moschetta A."/>
            <person name="Mangelsdorf D.J."/>
            <person name="Heyman R.A."/>
            <person name="Moore D.D."/>
            <person name="Auwerx J."/>
        </authorList>
    </citation>
    <scope>FUNCTION IN LIPID HOMEOSTASIS</scope>
</reference>
<reference key="14">
    <citation type="journal article" date="2005" name="Cell Metab.">
        <title>Fibroblast growth factor 15 functions as an enterohepatic signal to regulate bile acid homeostasis.</title>
        <authorList>
            <person name="Inagaki T."/>
            <person name="Choi M."/>
            <person name="Moschetta A."/>
            <person name="Peng L."/>
            <person name="Cummins C.L."/>
            <person name="McDonald J.G."/>
            <person name="Luo G."/>
            <person name="Jones S.A."/>
            <person name="Goodwin B."/>
            <person name="Richardson J.A."/>
            <person name="Gerard R.D."/>
            <person name="Repa J.J."/>
            <person name="Mangelsdorf D.J."/>
            <person name="Kliewer S.A."/>
        </authorList>
    </citation>
    <scope>FUNCTION IN BA HOMEOSTASIS</scope>
</reference>
<reference key="15">
    <citation type="journal article" date="2005" name="Endocrinology">
        <title>Regulation of carbohydrate metabolism by the farnesoid X receptor.</title>
        <authorList>
            <person name="Stayrook K.R."/>
            <person name="Bramlett K.S."/>
            <person name="Savkur R.S."/>
            <person name="Ficorilli J."/>
            <person name="Cook T."/>
            <person name="Christe M.E."/>
            <person name="Michael L.F."/>
            <person name="Burris T.P."/>
        </authorList>
    </citation>
    <scope>FUNCTION IN GLUCOSE HOMEOSTASIS</scope>
</reference>
<reference key="16">
    <citation type="journal article" date="2006" name="Drug Metab. Pharmacokinet.">
        <title>Chenodeoxycholic acid-mediated activation of the farnesoid X receptor negatively regulates hydroxysteroid sulfotransferase.</title>
        <authorList>
            <person name="Miyata M."/>
            <person name="Matsuda Y."/>
            <person name="Tsuchiya H."/>
            <person name="Kitada H."/>
            <person name="Akase T."/>
            <person name="Shimada M."/>
            <person name="Nagata K."/>
            <person name="Gonzalez F.J."/>
            <person name="Yamazoe Y."/>
        </authorList>
    </citation>
    <scope>FUNCTION BA HOMEOSTASIS</scope>
</reference>
<reference key="17">
    <citation type="journal article" date="2006" name="J. Biol. Chem.">
        <title>The farnesoid X receptor modulates adiposity and peripheral insulin sensitivity in mice.</title>
        <authorList>
            <person name="Cariou B."/>
            <person name="van Harmelen K."/>
            <person name="Duran-Sandoval D."/>
            <person name="van Dijk T.H."/>
            <person name="Grefhorst A."/>
            <person name="Abdelkarim M."/>
            <person name="Caron S."/>
            <person name="Torpier G."/>
            <person name="Fruchart J.C."/>
            <person name="Gonzalez F.J."/>
            <person name="Kuipers F."/>
            <person name="Staels B."/>
        </authorList>
    </citation>
    <scope>FUNCTION IN GLUCOSE HOMEOSTASIS</scope>
</reference>
<reference key="18">
    <citation type="journal article" date="2006" name="J. Clin. Invest.">
        <title>Farnesoid X receptor is essential for normal glucose homeostasis.</title>
        <authorList>
            <person name="Ma K."/>
            <person name="Saha P.K."/>
            <person name="Chan L."/>
            <person name="Moore D.D."/>
        </authorList>
    </citation>
    <scope>FUNCTION IN GLUCOSE HOMEOSTASIS</scope>
</reference>
<reference key="19">
    <citation type="journal article" date="2006" name="Proc. Natl. Acad. Sci. U.S.A.">
        <title>Activation of the nuclear receptor FXR improves hyperglycemia and hyperlipidemia in diabetic mice.</title>
        <authorList>
            <person name="Zhang Y."/>
            <person name="Lee F.Y."/>
            <person name="Barrera G."/>
            <person name="Lee H."/>
            <person name="Vales C."/>
            <person name="Gonzalez F.J."/>
            <person name="Willson T.M."/>
            <person name="Edwards P.A."/>
        </authorList>
    </citation>
    <scope>FUNCTION IN GLUCOSE HOMEOSTASIS</scope>
</reference>
<reference key="20">
    <citation type="journal article" date="2006" name="Proc. Natl. Acad. Sci. U.S.A.">
        <title>Regulation of antibacterial defense in the small intestine by the nuclear bile acid receptor.</title>
        <authorList>
            <person name="Inagaki T."/>
            <person name="Moschetta A."/>
            <person name="Lee Y.K."/>
            <person name="Peng L."/>
            <person name="Zhao G."/>
            <person name="Downes M."/>
            <person name="Yu R.T."/>
            <person name="Shelton J.M."/>
            <person name="Richardson J.A."/>
            <person name="Repa J.J."/>
            <person name="Mangelsdorf D.J."/>
            <person name="Kliewer S.A."/>
        </authorList>
    </citation>
    <scope>FUNCTION IN ANTIBACTERIAL DEFENSE</scope>
    <scope>TISSUE SPECIFICITY</scope>
</reference>
<reference key="21">
    <citation type="journal article" date="2008" name="Cancer Res.">
        <title>Nuclear bile acid receptor FXR protects against intestinal tumorigenesis.</title>
        <authorList>
            <person name="Modica S."/>
            <person name="Murzilli S."/>
            <person name="Salvatore L."/>
            <person name="Schmidt D.R."/>
            <person name="Moschetta A."/>
        </authorList>
    </citation>
    <scope>POSSIBLE FUNCTION IN TUMOR SUPPRESSION</scope>
</reference>
<reference key="22">
    <citation type="journal article" date="2008" name="J. Biol. Chem.">
        <title>The p300 acetylase is critical for ligand-activated farnesoid X receptor (FXR) induction of SHP.</title>
        <authorList>
            <person name="Fang S."/>
            <person name="Tsang S."/>
            <person name="Jones R."/>
            <person name="Ponugoti B."/>
            <person name="Yoon H."/>
            <person name="Wu S.Y."/>
            <person name="Chiang C.M."/>
            <person name="Willson T.M."/>
            <person name="Kemper J.K."/>
        </authorList>
    </citation>
    <scope>INTERACTION WITH EP300</scope>
    <scope>ACETYLATION</scope>
</reference>
<reference key="23">
    <citation type="journal article" date="2008" name="Hepatology">
        <title>Farnesoid X receptor antagonizes nuclear factor kappaB in hepatic inflammatory response.</title>
        <authorList>
            <person name="Wang Y.D."/>
            <person name="Chen W.D."/>
            <person name="Wang M."/>
            <person name="Yu D."/>
            <person name="Forman B.M."/>
            <person name="Huang W."/>
        </authorList>
    </citation>
    <scope>FUNCTION IN INFLAMMATORY RESPONSE</scope>
</reference>
<reference key="24">
    <citation type="journal article" date="2009" name="Biochim. Biophys. Acta">
        <title>Reciprocal regulation of the bile acid-activated receptor FXR and the interferon-gamma-STAT-1 pathway in macrophages.</title>
        <authorList>
            <person name="Renga B."/>
            <person name="Migliorati M."/>
            <person name="Mencarelli A."/>
            <person name="Fiorucci S."/>
        </authorList>
    </citation>
    <scope>TISSUE SPECIFICITY</scope>
</reference>
<reference key="25">
    <citation type="journal article" date="2009" name="Cell Metab.">
        <title>FXR acetylation is normally dynamically regulated by p300 and SIRT1 but constitutively elevated in metabolic disease states.</title>
        <authorList>
            <person name="Kemper J.K."/>
            <person name="Xiao Z."/>
            <person name="Ponugoti B."/>
            <person name="Miao J."/>
            <person name="Fang S."/>
            <person name="Kanamaluru D."/>
            <person name="Tsang S."/>
            <person name="Wu S.Y."/>
            <person name="Chiang C.M."/>
            <person name="Veenstra T.D."/>
        </authorList>
    </citation>
    <scope>ACETYLATION</scope>
</reference>
<reference key="26">
    <citation type="journal article" date="2009" name="J. Immunol.">
        <title>The bile acid receptor FXR is a modulator of intestinal innate immunity.</title>
        <authorList>
            <person name="Vavassori P."/>
            <person name="Mencarelli A."/>
            <person name="Renga B."/>
            <person name="Distrutti E."/>
            <person name="Fiorucci S."/>
        </authorList>
    </citation>
    <scope>FUNCTION IN INTESTINAL INNATE IMMUNITY</scope>
    <scope>TISSUE SPECIFICITY</scope>
    <scope>SUBCELLULAR LOCATION</scope>
</reference>
<reference key="27">
    <citation type="journal article" date="2009" name="Mol. Cell. Biol.">
        <title>Functional specificities of Brm and Brg-1 Swi/Snf ATPases in the feedback regulation of hepatic bile acid biosynthesis.</title>
        <authorList>
            <person name="Miao J."/>
            <person name="Fang S."/>
            <person name="Lee J."/>
            <person name="Comstock C."/>
            <person name="Knudsen K.E."/>
            <person name="Kemper J.K."/>
        </authorList>
    </citation>
    <scope>INTERACTION WITH SMARCA4</scope>
</reference>
<reference key="28">
    <citation type="journal article" date="2010" name="FEBS Lett.">
        <title>The nuclear receptor FXR is expressed in pancreatic beta-cells and protects human islets from lipotoxicity.</title>
        <authorList>
            <person name="Popescu I.R."/>
            <person name="Helleboid-Chapman A."/>
            <person name="Lucas A."/>
            <person name="Vandewalle B."/>
            <person name="Dumont J."/>
            <person name="Bouchaert E."/>
            <person name="Derudas B."/>
            <person name="Kerr-Conte J."/>
            <person name="Caron S."/>
            <person name="Pattou F."/>
            <person name="Staels B."/>
        </authorList>
    </citation>
    <scope>FUNCTION IN GLUCOSE HOMEOSTASIS</scope>
    <scope>TISSUE SPECIFICITY</scope>
</reference>
<reference key="29">
    <citation type="journal article" date="2010" name="Hepatology">
        <title>Genome-wide tissue-specific farnesoid X receptor binding in mouse liver and intestine.</title>
        <authorList>
            <person name="Thomas A.M."/>
            <person name="Hart S.N."/>
            <person name="Kong B."/>
            <person name="Fang J."/>
            <person name="Zhong X.B."/>
            <person name="Guo G.L."/>
        </authorList>
    </citation>
    <scope>DNA-BINDING</scope>
</reference>
<reference key="30">
    <citation type="journal article" date="2010" name="Nucleic Acids Res.">
        <title>Genome-wide interrogation of hepatic FXR reveals an asymmetric IR-1 motif and synergy with LRH-1.</title>
        <authorList>
            <person name="Chong H.K."/>
            <person name="Infante A.M."/>
            <person name="Seo Y.K."/>
            <person name="Jeon T.I."/>
            <person name="Zhang Y."/>
            <person name="Edwards P.A."/>
            <person name="Xie X."/>
            <person name="Osborne T.F."/>
        </authorList>
    </citation>
    <scope>DNA-BINDING</scope>
    <scope>INTERACTION WITH NR5A2</scope>
</reference>
<reference key="31">
    <citation type="journal article" date="2010" name="Nucl. Recept. Signal.">
        <title>Deciphering the nuclear bile acid receptor FXR paradigm.</title>
        <authorList>
            <person name="Modica S."/>
            <person name="Gadaleta R.M."/>
            <person name="Moschetta A."/>
        </authorList>
    </citation>
    <scope>REVIEW</scope>
</reference>
<reference key="32">
    <citation type="journal article" date="2011" name="Gut">
        <title>Farnesoid X receptor activation inhibits inflammation and preserves the intestinal barrier in inflammatory bowel disease.</title>
        <authorList>
            <person name="Gadaleta R.M."/>
            <person name="van Erpecum K.J."/>
            <person name="Oldenburg B."/>
            <person name="Willemsen E.C."/>
            <person name="Renooij W."/>
            <person name="Murzilli S."/>
            <person name="Klomp L.W."/>
            <person name="Siersema P.D."/>
            <person name="Schipper M.E."/>
            <person name="Danese S."/>
            <person name="Penna G."/>
            <person name="Laverny G."/>
            <person name="Adorini L."/>
            <person name="Moschetta A."/>
            <person name="van Mil S.W."/>
        </authorList>
    </citation>
    <scope>FUNCTION IN INTESTINAL INFLAMMATION</scope>
</reference>
<reference key="33">
    <citation type="journal article" date="2011" name="J. Clin. Invest.">
        <title>Farnesoid X receptor represses hepatic human APOA gene expression.</title>
        <authorList>
            <person name="Chennamsetty I."/>
            <person name="Claudel T."/>
            <person name="Kostner K.M."/>
            <person name="Baghdasaryan A."/>
            <person name="Kratky D."/>
            <person name="Levak-Frank S."/>
            <person name="Frank S."/>
            <person name="Gonzalez F.J."/>
            <person name="Trauner M."/>
            <person name="Kostner G.M."/>
        </authorList>
    </citation>
    <scope>FUNCTION IN LIPID HOMEOSTASIS</scope>
</reference>
<reference key="34">
    <citation type="journal article" date="2012" name="Biochim. Biophys. Acta">
        <title>Anti-inflammatory and metabolic actions of FXR: insights into molecular mechanisms.</title>
        <authorList>
            <person name="Hollman D.A."/>
            <person name="Milona A."/>
            <person name="van Erpecum K.J."/>
            <person name="van Mil S.W."/>
        </authorList>
    </citation>
    <scope>REVIEW</scope>
</reference>
<reference key="35">
    <citation type="journal article" date="2012" name="Gastroenterology">
        <title>Selective activation of nuclear bile acid receptor FXR in the intestine protects mice against cholestasis.</title>
        <authorList>
            <person name="Modica S."/>
            <person name="Petruzzelli M."/>
            <person name="Bellafante E."/>
            <person name="Murzilli S."/>
            <person name="Salvatore L."/>
            <person name="Celli N."/>
            <person name="Di Tullio G."/>
            <person name="Palasciano G."/>
            <person name="Moustafa T."/>
            <person name="Halilbasic E."/>
            <person name="Trauner M."/>
            <person name="Moschetta A."/>
        </authorList>
    </citation>
    <scope>POSSIBLE FUNCTION IN PROTECTION AGAINST CHOLESTASIS</scope>
</reference>
<reference key="36">
    <citation type="journal article" date="2013" name="PLoS ONE">
        <title>The bile acid sensor FXR is required for immune-regulatory activities of TLR-9 in intestinal inflammation.</title>
        <authorList>
            <person name="Renga B."/>
            <person name="Mencarelli A."/>
            <person name="Cipriani S."/>
            <person name="D'Amore C."/>
            <person name="Carino A."/>
            <person name="Bruno A."/>
            <person name="Francisci D."/>
            <person name="Zampella A."/>
            <person name="Distrutti E."/>
            <person name="Fiorucci S."/>
        </authorList>
    </citation>
    <scope>FUNCTION IN INFLAMMATORY RESPONSE</scope>
</reference>
<reference key="37">
    <citation type="journal article" date="2015" name="Cell Metab.">
        <title>MAFG is a transcriptional repressor of bile acid synthesis and metabolism.</title>
        <authorList>
            <person name="de Aguiar Vallim T.Q."/>
            <person name="Tarling E.J."/>
            <person name="Ahn H."/>
            <person name="Hagey L.R."/>
            <person name="Romanoski C.E."/>
            <person name="Lee R.G."/>
            <person name="Graham M.J."/>
            <person name="Motohashi H."/>
            <person name="Yamamoto M."/>
            <person name="Edwards P.A."/>
        </authorList>
    </citation>
    <scope>FUNCTION IN BA HOMEOSTASIS</scope>
</reference>
<reference key="38">
    <citation type="journal article" date="2015" name="Hepatology">
        <title>Farnesoid X receptor-induced lysine-specific histone demethylase reduces hepatic bile acid levels and protects the liver against bile acid toxicity.</title>
        <authorList>
            <person name="Kim Y.C."/>
            <person name="Fang S."/>
            <person name="Byun S."/>
            <person name="Seok S."/>
            <person name="Kemper B."/>
            <person name="Kemper J.K."/>
        </authorList>
    </citation>
    <scope>FUNCTION IN BA HOMEOSTASIS</scope>
</reference>
<reference key="39">
    <citation type="journal article" date="2016" name="Mol. Endocrinol.">
        <title>FXR primes the liver for intestinal FGF15 signaling by transient induction of beta-Klotho.</title>
        <authorList>
            <person name="Fu T."/>
            <person name="Kim Y.C."/>
            <person name="Byun S."/>
            <person name="Kim D.H."/>
            <person name="Seok S."/>
            <person name="Suino-Powell K."/>
            <person name="Xu H.E."/>
            <person name="Kemper B."/>
            <person name="Kemper J.K."/>
        </authorList>
    </citation>
    <scope>FUNCTION IN BA HOMEOSTASIS</scope>
</reference>
<protein>
    <recommendedName>
        <fullName>Bile acid receptor</fullName>
    </recommendedName>
    <alternativeName>
        <fullName>Farnesoid X-activated receptor</fullName>
    </alternativeName>
    <alternativeName>
        <fullName>Farnesol receptor HRR-1</fullName>
    </alternativeName>
    <alternativeName>
        <fullName>Nuclear receptor subfamily 1 group H member 4</fullName>
    </alternativeName>
    <alternativeName>
        <fullName>Retinoid X receptor-interacting protein 14</fullName>
        <shortName>RXR-interacting protein 14</shortName>
    </alternativeName>
</protein>
<name>NR1H4_MOUSE</name>
<organism>
    <name type="scientific">Mus musculus</name>
    <name type="common">Mouse</name>
    <dbReference type="NCBI Taxonomy" id="10090"/>
    <lineage>
        <taxon>Eukaryota</taxon>
        <taxon>Metazoa</taxon>
        <taxon>Chordata</taxon>
        <taxon>Craniata</taxon>
        <taxon>Vertebrata</taxon>
        <taxon>Euteleostomi</taxon>
        <taxon>Mammalia</taxon>
        <taxon>Eutheria</taxon>
        <taxon>Euarchontoglires</taxon>
        <taxon>Glires</taxon>
        <taxon>Rodentia</taxon>
        <taxon>Myomorpha</taxon>
        <taxon>Muroidea</taxon>
        <taxon>Muridae</taxon>
        <taxon>Murinae</taxon>
        <taxon>Mus</taxon>
        <taxon>Mus</taxon>
    </lineage>
</organism>
<sequence>MVMQFQGLENPIQISLHHSHRLSGFVPEGMSVKPAKGMLTEHAAGPLGQNLDLESYSPYNNVPFPQVQPQISSSSYYSNLGFYPQQPEDWYSPGIYELRRMPAETGYQGETEVSEMPVTKKPRMAAASAGRIKGDELCVVCGDRASGYHYNALTCEGCKGFFRRSITKNAVYKCKNGGNCVMDMYMRRKCQECRLRKCKEMGMLAECMYTGLLTEIQCKSKRLRKNVKQHADQTANEDDSEGRDLRQVTSTTKFCREKTELTADQQTLLDYIMDSYNKQRMPQEITNKILKEEFSAEENFLILTEMATSHVQILVEFTKKLPGFQTLDHEDQIALLKGSAVEAMFLRSAEIFNKKLPAGHADLLEERIRKSGISDEYITPMFSFYKSVGELKMTQEEYALLTAIVILSPDRQYIKDREAVEKLQEPLLDVLQKLCKMYQPENPQHFACLLGRLTELRTFNHHHAEMLMSWRVNDHKFTPLLCEIWDVQ</sequence>
<evidence type="ECO:0000250" key="1">
    <source>
        <dbReference type="UniProtKB" id="Q62735"/>
    </source>
</evidence>
<evidence type="ECO:0000250" key="2">
    <source>
        <dbReference type="UniProtKB" id="Q96RI1"/>
    </source>
</evidence>
<evidence type="ECO:0000255" key="3">
    <source>
        <dbReference type="PROSITE-ProRule" id="PRU00407"/>
    </source>
</evidence>
<evidence type="ECO:0000255" key="4">
    <source>
        <dbReference type="PROSITE-ProRule" id="PRU01189"/>
    </source>
</evidence>
<evidence type="ECO:0000269" key="5">
    <source>
    </source>
</evidence>
<evidence type="ECO:0000269" key="6">
    <source>
    </source>
</evidence>
<evidence type="ECO:0000269" key="7">
    <source>
    </source>
</evidence>
<evidence type="ECO:0000269" key="8">
    <source>
    </source>
</evidence>
<evidence type="ECO:0000269" key="9">
    <source>
    </source>
</evidence>
<evidence type="ECO:0000269" key="10">
    <source>
    </source>
</evidence>
<evidence type="ECO:0000269" key="11">
    <source>
    </source>
</evidence>
<evidence type="ECO:0000269" key="12">
    <source>
    </source>
</evidence>
<evidence type="ECO:0000269" key="13">
    <source>
    </source>
</evidence>
<evidence type="ECO:0000269" key="14">
    <source>
    </source>
</evidence>
<evidence type="ECO:0000269" key="15">
    <source>
    </source>
</evidence>
<evidence type="ECO:0000269" key="16">
    <source>
    </source>
</evidence>
<evidence type="ECO:0000269" key="17">
    <source>
    </source>
</evidence>
<evidence type="ECO:0000269" key="18">
    <source>
    </source>
</evidence>
<evidence type="ECO:0000269" key="19">
    <source>
    </source>
</evidence>
<evidence type="ECO:0000269" key="20">
    <source>
    </source>
</evidence>
<evidence type="ECO:0000269" key="21">
    <source>
    </source>
</evidence>
<evidence type="ECO:0000269" key="22">
    <source>
    </source>
</evidence>
<evidence type="ECO:0000269" key="23">
    <source>
    </source>
</evidence>
<evidence type="ECO:0000269" key="24">
    <source>
    </source>
</evidence>
<evidence type="ECO:0000269" key="25">
    <source>
    </source>
</evidence>
<evidence type="ECO:0000269" key="26">
    <source>
    </source>
</evidence>
<evidence type="ECO:0000269" key="27">
    <source>
    </source>
</evidence>
<evidence type="ECO:0000269" key="28">
    <source>
    </source>
</evidence>
<evidence type="ECO:0000269" key="29">
    <source>
    </source>
</evidence>
<evidence type="ECO:0000269" key="30">
    <source>
    </source>
</evidence>
<evidence type="ECO:0000269" key="31">
    <source>
    </source>
</evidence>
<evidence type="ECO:0000269" key="32">
    <source>
    </source>
</evidence>
<evidence type="ECO:0000269" key="33">
    <source>
    </source>
</evidence>
<evidence type="ECO:0000269" key="34">
    <source>
    </source>
</evidence>
<evidence type="ECO:0000269" key="35">
    <source>
    </source>
</evidence>
<evidence type="ECO:0000269" key="36">
    <source>
    </source>
</evidence>
<evidence type="ECO:0000269" key="37">
    <source>
    </source>
</evidence>
<evidence type="ECO:0000269" key="38">
    <source>
    </source>
</evidence>
<evidence type="ECO:0000269" key="39">
    <source>
    </source>
</evidence>
<evidence type="ECO:0000303" key="40">
    <source>
    </source>
</evidence>
<evidence type="ECO:0000303" key="41">
    <source>
    </source>
</evidence>
<evidence type="ECO:0000303" key="42">
    <source>
    </source>
</evidence>
<evidence type="ECO:0000305" key="43"/>
<evidence type="ECO:0000305" key="44">
    <source>
    </source>
</evidence>
<evidence type="ECO:0000305" key="45">
    <source>
    </source>
</evidence>
<evidence type="ECO:0000305" key="46">
    <source>
    </source>
</evidence>
<comment type="function">
    <text evidence="1 2 5 6 7 8 9 10 11 12 14 15 16 17 18 19 20 21 23 27 29 30 31 32 33 35 36 37 38 45 46">Ligand-activated transcription factor. Receptor for bile acids (BAs) such as chenodeoxycholic acid (CDCA), lithocholic acid, deoxycholic acid (DCA) and allocholic acid (ACA). Plays a essential role in BA homeostasis through the regulation of genes involved in BA synthesis, conjugation and enterohepatic circulation. Also regulates lipid and glucose homeostasis and is involved in innate immune response (PubMed:11030617, PubMed:21383957, PubMed:22820415). The FXR-RXR heterodimer binds predominantly to farnesoid X receptor response elements (FXREs) containing two inverted repeats of the consensus sequence 5'-AGGTCA-3' in which the monomers are spaced by 1 nucleotide (IR-1) but also to tandem repeat DR1 sites with lower affinity, and can be activated by either FXR or RXR-specific ligands. It is proposed that monomeric nuclear receptors such as NR5A2/LRH-1 bound to coregulatory nuclear responsive element (NRE) halfsites located in close proximity to FXREs modulate transcriptional activity (PubMed:20091679, PubMed:20483916). In the liver activates transcription of the corepressor NR0B2 thereby indirectly inhibiting CYP7A1 and CYP8B1 (involved in BA synthesis) implicating at least in part histone demethylase KDM1A resulting in epigenomic repression, and SLC10A1/NTCP (involved in hepatic uptake of conjugated BAs). Activates transcription of the repressor MAFG (involved in regulation of BA synthesis) (PubMed:21383957, PubMed:25545350, PubMed:25651182). Activates transcription of SLC27A5/BACS and BAAT (involved in BA conjugation), ABCB11/BSEP (involved in bile salt export) by directly recruiting histone methyltransferase CARM1, and ABCC2/MRP2 (involved in secretion of conjugated BAs) and ABCB4 (involved in secretion of phosphatidylcholine in the small intestine) (PubMed:21383957). In ileal enterocytes activates FABP6/IBABP (involved in cytosolic transport), SLC51A/OSTA and SLC51B/OSTB (involved in secretion of conjugated BAs to the portal blood), and repressor NR0B2/SHP thereby indirectly inhibiting SLC10A2/ASBT (involved in BA uptake) (By similarity). In the intestine activates FGF15 expression and secretion leading to hepatic CYP7A1 repression; the function also involves the coordinated induction of hepatic KLB/beta-klotho expression (PubMed:16213224, PubMed:26505219). Transcriptional activation of FABP6/IBAP and SCD1 but not of ABCB11 is isoform-specific (PubMed:12393883). Regulates transcription of liver UGT2B4 and SULT2A1 involved in BA detoxification; binding to the UGT2B4 promoter seems to imply a monomeric transactivation independent of RXRA (By similarity). Modulates lipid homeostasis by activating liver NR0B2/SHP-mediated repression of SREBF1 isoform SREBP-1C (involved in de novo lipogenesis), expression of PLTP (involved in HDL formation), SCARB1 (involved in HDL hepatic uptake), APOE, APOC1, APOC4, VLDLR and SDC1 (involved in the hepatic uptake of LDL and IDL remnants), and inhibiting expression of MTTP (involved in VLDL assembly) (PubMed:12421815, PubMed:15146238). Increases expression of APOC2 (promoting lipoprotein lipase activity implicated in triglyceride clearance) (PubMed:11579204). Transrepresses APOA1 probably involving a monomeric competition with NR2A1 for binding to a DR1 element (PubMed:21804189). Also reduces triglyceride clearance by inhibiting expression of ANGPTL3 and APOC3 (both involved in inhibition of lipoprotein lipase) (PubMed:12891557, PubMed:15146238). Involved in glucose homeostasis by modulating hepatic gluconeogenesis through activation of NR0B2/SHP-mediated repression of respective genes. Modulates glycogen synthesis (inducing phosphorylation of glycogen synthase kinase-3). Modulates glucose-stimulated insulin secretion and is involved in insulin resistance (PubMed:15564327, PubMed:16410358, PubMed:16446356, PubMed:16557297, PubMed:20447400). Involved in intestinal innate immunity. Plays a role in protecting the distal small intestine against bacterial overgrowth and preservation of the epithelial barrier (PubMed:16473946, PubMed:21242261). Down-regulates inflammatory cytokine expression in several types of immune cells including macrophages and mononuclear cells (PubMed:19864602). Mediates transrepression of TLR4-induced cytokine expression; the function seems to require its sumoylation and prevents N-CoR nuclear receptor corepressor clearance from target genes such as IL1B and NOS2 (By similarity). Involved in the TLR9-mediated protective mechanism in intestinal inflammation (PubMed:23372731). Plays a anti-inflammatory role in liver inflammation; proposed to inhibit pro-inflammatory (but not antiapoptotic) NF-kappa-B signaling (PubMed:18972444).</text>
</comment>
<comment type="function">
    <molecule>Isoform 2</molecule>
    <text evidence="9">Activates transcription of IBAP and SDC1.</text>
</comment>
<comment type="function">
    <molecule>Isoform 4</molecule>
    <text evidence="9">Activates transcription of IBAP and SDC1.</text>
</comment>
<comment type="subunit">
    <text evidence="1 2 13 22 26 31 39">Heterodimer with RXRA; the heterodimerization enhances the binding affinity for LXXLL motifs from coactivators (By similarity). Binds DNA predominantly as a heterodimer with RXRA (PubMed:7760852). After activation by agonist binding interacts with coactivators. Interacts with PPARGC1A, SMARCA4 and EP300 (PubMed:14729567, PubMed:18842595, PubMed:19805516). Interacts with NCOA1, NCOA2, CARM1, SETD7, PRMT1, GPS2, SMARCA4 and MED1. Interacts with XRCC5 and XRCC6; decreasing NR1H4/FXR transactivation activity towards ABCB11/BSEP. Interacts with PAGR1 and NCOA6; indicative for an association with an MLL2/MLL3 complex (ASCOM) (By similarity). Interacts with NR5A2 (PubMed:20483916).</text>
</comment>
<comment type="interaction">
    <interactant intactId="EBI-11659377">
        <id>Q60641-1</id>
    </interactant>
    <interactant intactId="EBI-11359934">
        <id>O70343-1</id>
        <label>Ppargc1a</label>
    </interactant>
    <organismsDiffer>false</organismsDiffer>
    <experiments>3</experiments>
</comment>
<comment type="interaction">
    <interactant intactId="EBI-11659386">
        <id>Q60641-2</id>
    </interactant>
    <interactant intactId="EBI-11359934">
        <id>O70343-1</id>
        <label>Ppargc1a</label>
    </interactant>
    <organismsDiffer>false</organismsDiffer>
    <experiments>2</experiments>
</comment>
<comment type="subcellular location">
    <subcellularLocation>
        <location evidence="27">Nucleus</location>
    </subcellularLocation>
</comment>
<comment type="alternative products">
    <event type="alternative promoter"/>
    <event type="alternative splicing"/>
    <isoform>
        <id>Q60641-1</id>
        <name>1</name>
        <name>FXRbeta1</name>
        <name>FXRalpha3</name>
        <name>FXRalpha2(+)</name>
        <sequence type="displayed"/>
    </isoform>
    <isoform>
        <id>Q60641-2</id>
        <name>2</name>
        <name>FXRbeta2</name>
        <name>FXFRalpha4</name>
        <name>FXRalpha2(-)</name>
        <sequence type="described" ref="VSP_003666"/>
    </isoform>
    <isoform>
        <id>Q60641-3</id>
        <name>3</name>
        <name>FXRalpha1</name>
        <name>FXRalpha1(+)</name>
        <sequence type="described" ref="VSP_058157"/>
    </isoform>
    <isoform>
        <id>Q60641-4</id>
        <name>4</name>
        <name>FXRalpha2</name>
        <name>FXRalpha1(-)</name>
        <sequence type="described" ref="VSP_058157 VSP_003666"/>
    </isoform>
</comment>
<comment type="tissue specificity">
    <text evidence="19 25 27 30">Expressed in liver and kidney. Expressed in pancreatic beta cells and macrophages. Expressed in the villus epithelium in adult ileum, with highest expression in the intervillus regions. Expression in colon is reduced by inflammation.</text>
</comment>
<comment type="PTM">
    <text evidence="2 22 28">Acetylated by EP300 (PubMed:18842595). Lys-228 as is the major acetylation site for EP300; the dynamicly regulated acetylation inhibits heterodimerization with RXRA and transactivation activity. Deacetylated by SIRT1 (By similarity). Elevated acetylation levels are found in metabolic disease states (mouse models of obesity and type II diabetes) (PubMed:19883617).</text>
</comment>
<comment type="PTM">
    <text evidence="2">Methylation may increase transactivation of target genes.</text>
</comment>
<comment type="PTM">
    <text evidence="2">Phosphorylation by PKC/PRKCA increases transactivation activity by promoting association with PPARGC1A.</text>
</comment>
<comment type="PTM">
    <text evidence="2">Sumoylated upon ligand binding.</text>
</comment>
<comment type="disease">
    <text evidence="24 27 34">Activation protects mice against cholestasis, development of chronical intestinal inflammation and fibrosis. May suppress intestinal tumorigenesis.</text>
</comment>
<comment type="disruption phenotype">
    <text evidence="5">Elevated serum bile acid, cholesterol, and triglycerides, increased hepatic cholesterol and triglycerides, and a proatherogenic serum lipoprotein profile. Reduced bile acid pools and reduced fecal bile acid excretion.</text>
</comment>
<comment type="miscellaneous">
    <text evidence="44 45">Mouse Nr1h4/FXR is less responsive to CDCA and more responsive to cholic acid (CA) than human FXR.</text>
</comment>
<comment type="miscellaneous">
    <molecule>Isoform 1</molecule>
    <text>Produced by alternative promoter usage.</text>
</comment>
<comment type="miscellaneous">
    <molecule>Isoform 2</molecule>
    <text evidence="43">Produced by alternative splicing of isoform 1.</text>
</comment>
<comment type="miscellaneous">
    <molecule>Isoform 3</molecule>
    <text evidence="43">Produced by alternative promoter usage.</text>
</comment>
<comment type="miscellaneous">
    <molecule>Isoform 4</molecule>
    <text evidence="43">Produced by alternative splicing of isoform 3.</text>
</comment>
<comment type="similarity">
    <text evidence="43">Belongs to the nuclear hormone receptor family. NR1 subfamily.</text>
</comment>
<proteinExistence type="evidence at protein level"/>
<accession>Q60641</accession>
<accession>D3YTT2</accession>
<accession>E9QJW2</accession>
<accession>Q60642</accession>
<accession>Q60643</accession>
<dbReference type="EMBL" id="U09416">
    <property type="protein sequence ID" value="AAC53066.1"/>
    <property type="molecule type" value="mRNA"/>
</dbReference>
<dbReference type="EMBL" id="U09417">
    <property type="protein sequence ID" value="AAC53065.1"/>
    <property type="molecule type" value="mRNA"/>
</dbReference>
<dbReference type="EMBL" id="U09418">
    <property type="protein sequence ID" value="AAC52978.1"/>
    <property type="molecule type" value="mRNA"/>
</dbReference>
<dbReference type="EMBL" id="AC152417">
    <property type="status" value="NOT_ANNOTATED_CDS"/>
    <property type="molecule type" value="Genomic_DNA"/>
</dbReference>
<dbReference type="EMBL" id="BC015261">
    <property type="protein sequence ID" value="AAH15261.1"/>
    <property type="molecule type" value="mRNA"/>
</dbReference>
<dbReference type="CCDS" id="CCDS24116.1">
    <molecule id="Q60641-2"/>
</dbReference>
<dbReference type="CCDS" id="CCDS48668.1">
    <molecule id="Q60641-1"/>
</dbReference>
<dbReference type="CCDS" id="CCDS48669.1">
    <molecule id="Q60641-3"/>
</dbReference>
<dbReference type="PIR" id="I49018">
    <property type="entry name" value="I49018"/>
</dbReference>
<dbReference type="PIR" id="I49019">
    <property type="entry name" value="I49019"/>
</dbReference>
<dbReference type="PIR" id="I49020">
    <property type="entry name" value="I49020"/>
</dbReference>
<dbReference type="RefSeq" id="NP_001156976.1">
    <molecule id="Q60641-3"/>
    <property type="nucleotide sequence ID" value="NM_001163504.1"/>
</dbReference>
<dbReference type="RefSeq" id="NP_001157172.1">
    <molecule id="Q60641-1"/>
    <property type="nucleotide sequence ID" value="NM_001163700.1"/>
</dbReference>
<dbReference type="RefSeq" id="NP_001372640.1">
    <molecule id="Q60641-4"/>
    <property type="nucleotide sequence ID" value="NM_001385711.1"/>
</dbReference>
<dbReference type="RefSeq" id="NP_033134.2">
    <molecule id="Q60641-2"/>
    <property type="nucleotide sequence ID" value="NM_009108.2"/>
</dbReference>
<dbReference type="RefSeq" id="XP_006513454.1">
    <molecule id="Q60641-3"/>
    <property type="nucleotide sequence ID" value="XM_006513391.4"/>
</dbReference>
<dbReference type="RefSeq" id="XP_006513456.1">
    <property type="nucleotide sequence ID" value="XM_006513393.3"/>
</dbReference>
<dbReference type="RefSeq" id="XP_030100823.1">
    <molecule id="Q60641-3"/>
    <property type="nucleotide sequence ID" value="XM_030244963.2"/>
</dbReference>
<dbReference type="SMR" id="Q60641"/>
<dbReference type="BioGRID" id="203043">
    <property type="interactions" value="8"/>
</dbReference>
<dbReference type="CORUM" id="Q60641"/>
<dbReference type="DIP" id="DIP-443N"/>
<dbReference type="FunCoup" id="Q60641">
    <property type="interactions" value="348"/>
</dbReference>
<dbReference type="IntAct" id="Q60641">
    <property type="interactions" value="1"/>
</dbReference>
<dbReference type="STRING" id="10090.ENSMUSP00000100933"/>
<dbReference type="BindingDB" id="Q60641"/>
<dbReference type="ChEMBL" id="CHEMBL5343"/>
<dbReference type="GlyGen" id="Q60641">
    <property type="glycosylation" value="1 site, 1 O-linked glycan (1 site)"/>
</dbReference>
<dbReference type="iPTMnet" id="Q60641"/>
<dbReference type="PhosphoSitePlus" id="Q60641"/>
<dbReference type="PaxDb" id="10090-ENSMUSP00000053092"/>
<dbReference type="ProteomicsDB" id="295519">
    <molecule id="Q60641-1"/>
</dbReference>
<dbReference type="ProteomicsDB" id="295520">
    <molecule id="Q60641-2"/>
</dbReference>
<dbReference type="ProteomicsDB" id="295521">
    <molecule id="Q60641-3"/>
</dbReference>
<dbReference type="ProteomicsDB" id="295522">
    <molecule id="Q60641-4"/>
</dbReference>
<dbReference type="Antibodypedia" id="17868">
    <property type="antibodies" value="446 antibodies from 36 providers"/>
</dbReference>
<dbReference type="DNASU" id="20186"/>
<dbReference type="Ensembl" id="ENSMUST00000058126.15">
    <molecule id="Q60641-2"/>
    <property type="protein sequence ID" value="ENSMUSP00000053092.9"/>
    <property type="gene ID" value="ENSMUSG00000047638.16"/>
</dbReference>
<dbReference type="Ensembl" id="ENSMUST00000105296.9">
    <molecule id="Q60641-1"/>
    <property type="protein sequence ID" value="ENSMUSP00000100933.3"/>
    <property type="gene ID" value="ENSMUSG00000047638.16"/>
</dbReference>
<dbReference type="Ensembl" id="ENSMUST00000105297.2">
    <molecule id="Q60641-3"/>
    <property type="protein sequence ID" value="ENSMUSP00000100934.2"/>
    <property type="gene ID" value="ENSMUSG00000047638.16"/>
</dbReference>
<dbReference type="GeneID" id="20186"/>
<dbReference type="KEGG" id="mmu:20186"/>
<dbReference type="UCSC" id="uc007gsg.2">
    <molecule id="Q60641-1"/>
    <property type="organism name" value="mouse"/>
</dbReference>
<dbReference type="UCSC" id="uc007gsh.2">
    <property type="organism name" value="mouse"/>
</dbReference>
<dbReference type="AGR" id="MGI:1352464"/>
<dbReference type="CTD" id="9971"/>
<dbReference type="MGI" id="MGI:1352464">
    <property type="gene designation" value="Nr1h4"/>
</dbReference>
<dbReference type="VEuPathDB" id="HostDB:ENSMUSG00000047638"/>
<dbReference type="eggNOG" id="KOG3575">
    <property type="taxonomic scope" value="Eukaryota"/>
</dbReference>
<dbReference type="GeneTree" id="ENSGT00940000158037"/>
<dbReference type="HOGENOM" id="CLU_007368_12_3_1"/>
<dbReference type="InParanoid" id="Q60641"/>
<dbReference type="OMA" id="XISDEYI"/>
<dbReference type="OrthoDB" id="5837785at2759"/>
<dbReference type="PhylomeDB" id="Q60641"/>
<dbReference type="TreeFam" id="TF316304"/>
<dbReference type="Reactome" id="R-MMU-159418">
    <property type="pathway name" value="Recycling of bile acids and salts"/>
</dbReference>
<dbReference type="Reactome" id="R-MMU-192105">
    <property type="pathway name" value="Synthesis of bile acids and bile salts"/>
</dbReference>
<dbReference type="Reactome" id="R-MMU-193368">
    <property type="pathway name" value="Synthesis of bile acids and bile salts via 7alpha-hydroxycholesterol"/>
</dbReference>
<dbReference type="Reactome" id="R-MMU-193807">
    <property type="pathway name" value="Synthesis of bile acids and bile salts via 27-hydroxycholesterol"/>
</dbReference>
<dbReference type="Reactome" id="R-MMU-211976">
    <property type="pathway name" value="Endogenous sterols"/>
</dbReference>
<dbReference type="Reactome" id="R-MMU-383280">
    <property type="pathway name" value="Nuclear Receptor transcription pathway"/>
</dbReference>
<dbReference type="Reactome" id="R-MMU-4090294">
    <property type="pathway name" value="SUMOylation of intracellular receptors"/>
</dbReference>
<dbReference type="BioGRID-ORCS" id="20186">
    <property type="hits" value="3 hits in 80 CRISPR screens"/>
</dbReference>
<dbReference type="PRO" id="PR:Q60641"/>
<dbReference type="Proteomes" id="UP000000589">
    <property type="component" value="Chromosome 10"/>
</dbReference>
<dbReference type="RNAct" id="Q60641">
    <property type="molecule type" value="protein"/>
</dbReference>
<dbReference type="Bgee" id="ENSMUSG00000047638">
    <property type="expression patterns" value="Expressed in right kidney and 83 other cell types or tissues"/>
</dbReference>
<dbReference type="ExpressionAtlas" id="Q60641">
    <property type="expression patterns" value="baseline and differential"/>
</dbReference>
<dbReference type="GO" id="GO:0000785">
    <property type="term" value="C:chromatin"/>
    <property type="evidence" value="ECO:0000266"/>
    <property type="project" value="MGI"/>
</dbReference>
<dbReference type="GO" id="GO:0005829">
    <property type="term" value="C:cytosol"/>
    <property type="evidence" value="ECO:0007669"/>
    <property type="project" value="Ensembl"/>
</dbReference>
<dbReference type="GO" id="GO:0000791">
    <property type="term" value="C:euchromatin"/>
    <property type="evidence" value="ECO:0007669"/>
    <property type="project" value="Ensembl"/>
</dbReference>
<dbReference type="GO" id="GO:0016607">
    <property type="term" value="C:nuclear speck"/>
    <property type="evidence" value="ECO:0007669"/>
    <property type="project" value="Ensembl"/>
</dbReference>
<dbReference type="GO" id="GO:0043235">
    <property type="term" value="C:receptor complex"/>
    <property type="evidence" value="ECO:0007669"/>
    <property type="project" value="Ensembl"/>
</dbReference>
<dbReference type="GO" id="GO:0032052">
    <property type="term" value="F:bile acid binding"/>
    <property type="evidence" value="ECO:0000315"/>
    <property type="project" value="BHF-UCL"/>
</dbReference>
<dbReference type="GO" id="GO:0038186">
    <property type="term" value="F:bile acid nuclear receptor activity"/>
    <property type="evidence" value="ECO:0000315"/>
    <property type="project" value="BHF-UCL"/>
</dbReference>
<dbReference type="GO" id="GO:1902122">
    <property type="term" value="F:chenodeoxycholic acid binding"/>
    <property type="evidence" value="ECO:0007669"/>
    <property type="project" value="Ensembl"/>
</dbReference>
<dbReference type="GO" id="GO:0001228">
    <property type="term" value="F:DNA-binding transcription activator activity, RNA polymerase II-specific"/>
    <property type="evidence" value="ECO:0000314"/>
    <property type="project" value="MGI"/>
</dbReference>
<dbReference type="GO" id="GO:0003700">
    <property type="term" value="F:DNA-binding transcription factor activity"/>
    <property type="evidence" value="ECO:0000316"/>
    <property type="project" value="MGI"/>
</dbReference>
<dbReference type="GO" id="GO:0004879">
    <property type="term" value="F:nuclear receptor activity"/>
    <property type="evidence" value="ECO:0000314"/>
    <property type="project" value="MGI"/>
</dbReference>
<dbReference type="GO" id="GO:0046965">
    <property type="term" value="F:nuclear retinoid X receptor binding"/>
    <property type="evidence" value="ECO:0000314"/>
    <property type="project" value="MGI"/>
</dbReference>
<dbReference type="GO" id="GO:0000978">
    <property type="term" value="F:RNA polymerase II cis-regulatory region sequence-specific DNA binding"/>
    <property type="evidence" value="ECO:0007669"/>
    <property type="project" value="Ensembl"/>
</dbReference>
<dbReference type="GO" id="GO:0001221">
    <property type="term" value="F:transcription coregulator binding"/>
    <property type="evidence" value="ECO:0007669"/>
    <property type="project" value="Ensembl"/>
</dbReference>
<dbReference type="GO" id="GO:0008270">
    <property type="term" value="F:zinc ion binding"/>
    <property type="evidence" value="ECO:0007669"/>
    <property type="project" value="UniProtKB-KW"/>
</dbReference>
<dbReference type="GO" id="GO:0008206">
    <property type="term" value="P:bile acid metabolic process"/>
    <property type="evidence" value="ECO:0000315"/>
    <property type="project" value="MGI"/>
</dbReference>
<dbReference type="GO" id="GO:0007043">
    <property type="term" value="P:cell-cell junction assembly"/>
    <property type="evidence" value="ECO:0000315"/>
    <property type="project" value="UniProtKB"/>
</dbReference>
<dbReference type="GO" id="GO:1903413">
    <property type="term" value="P:cellular response to bile acid"/>
    <property type="evidence" value="ECO:0000315"/>
    <property type="project" value="BHF-UCL"/>
</dbReference>
<dbReference type="GO" id="GO:0071398">
    <property type="term" value="P:cellular response to fatty acid"/>
    <property type="evidence" value="ECO:0007669"/>
    <property type="project" value="Ensembl"/>
</dbReference>
<dbReference type="GO" id="GO:0071222">
    <property type="term" value="P:cellular response to lipopolysaccharide"/>
    <property type="evidence" value="ECO:0000315"/>
    <property type="project" value="UniProtKB"/>
</dbReference>
<dbReference type="GO" id="GO:0042632">
    <property type="term" value="P:cholesterol homeostasis"/>
    <property type="evidence" value="ECO:0000315"/>
    <property type="project" value="UniProtKB"/>
</dbReference>
<dbReference type="GO" id="GO:0042742">
    <property type="term" value="P:defense response to bacterium"/>
    <property type="evidence" value="ECO:0000314"/>
    <property type="project" value="UniProtKB"/>
</dbReference>
<dbReference type="GO" id="GO:0055089">
    <property type="term" value="P:fatty acid homeostasis"/>
    <property type="evidence" value="ECO:0000315"/>
    <property type="project" value="UniProtKB"/>
</dbReference>
<dbReference type="GO" id="GO:0042593">
    <property type="term" value="P:glucose homeostasis"/>
    <property type="evidence" value="ECO:0000314"/>
    <property type="project" value="UniProtKB"/>
</dbReference>
<dbReference type="GO" id="GO:0006954">
    <property type="term" value="P:inflammatory response"/>
    <property type="evidence" value="ECO:0007669"/>
    <property type="project" value="UniProtKB-KW"/>
</dbReference>
<dbReference type="GO" id="GO:0045087">
    <property type="term" value="P:innate immune response"/>
    <property type="evidence" value="ECO:0007669"/>
    <property type="project" value="UniProtKB-KW"/>
</dbReference>
<dbReference type="GO" id="GO:0001678">
    <property type="term" value="P:intracellular glucose homeostasis"/>
    <property type="evidence" value="ECO:0000314"/>
    <property type="project" value="UniProtKB"/>
</dbReference>
<dbReference type="GO" id="GO:0035356">
    <property type="term" value="P:intracellular triglyceride homeostasis"/>
    <property type="evidence" value="ECO:0007669"/>
    <property type="project" value="Ensembl"/>
</dbReference>
<dbReference type="GO" id="GO:0043066">
    <property type="term" value="P:negative regulation of apoptotic process"/>
    <property type="evidence" value="ECO:0007669"/>
    <property type="project" value="Ensembl"/>
</dbReference>
<dbReference type="GO" id="GO:0043124">
    <property type="term" value="P:negative regulation of canonical NF-kappaB signal transduction"/>
    <property type="evidence" value="ECO:0000315"/>
    <property type="project" value="UniProtKB"/>
</dbReference>
<dbReference type="GO" id="GO:0050728">
    <property type="term" value="P:negative regulation of inflammatory response"/>
    <property type="evidence" value="ECO:0000315"/>
    <property type="project" value="UniProtKB"/>
</dbReference>
<dbReference type="GO" id="GO:0032692">
    <property type="term" value="P:negative regulation of interleukin-1 production"/>
    <property type="evidence" value="ECO:0000315"/>
    <property type="project" value="UniProtKB"/>
</dbReference>
<dbReference type="GO" id="GO:0032703">
    <property type="term" value="P:negative regulation of interleukin-2 production"/>
    <property type="evidence" value="ECO:0000315"/>
    <property type="project" value="UniProtKB"/>
</dbReference>
<dbReference type="GO" id="GO:0032715">
    <property type="term" value="P:negative regulation of interleukin-6 production"/>
    <property type="evidence" value="ECO:0000314"/>
    <property type="project" value="UniProtKB"/>
</dbReference>
<dbReference type="GO" id="GO:0071638">
    <property type="term" value="P:negative regulation of monocyte chemotactic protein-1 production"/>
    <property type="evidence" value="ECO:0000315"/>
    <property type="project" value="UniProtKB"/>
</dbReference>
<dbReference type="GO" id="GO:0032088">
    <property type="term" value="P:negative regulation of NF-kappaB transcription factor activity"/>
    <property type="evidence" value="ECO:0000315"/>
    <property type="project" value="UniProtKB"/>
</dbReference>
<dbReference type="GO" id="GO:0000122">
    <property type="term" value="P:negative regulation of transcription by RNA polymerase II"/>
    <property type="evidence" value="ECO:0000315"/>
    <property type="project" value="BHF-UCL"/>
</dbReference>
<dbReference type="GO" id="GO:0032720">
    <property type="term" value="P:negative regulation of tumor necrosis factor production"/>
    <property type="evidence" value="ECO:0000315"/>
    <property type="project" value="UniProtKB"/>
</dbReference>
<dbReference type="GO" id="GO:0010804">
    <property type="term" value="P:negative regulation of tumor necrosis factor-mediated signaling pathway"/>
    <property type="evidence" value="ECO:0000315"/>
    <property type="project" value="UniProtKB"/>
</dbReference>
<dbReference type="GO" id="GO:0032689">
    <property type="term" value="P:negative regulation of type II interferon production"/>
    <property type="evidence" value="ECO:0000315"/>
    <property type="project" value="UniProtKB"/>
</dbReference>
<dbReference type="GO" id="GO:0010903">
    <property type="term" value="P:negative regulation of very-low-density lipoprotein particle remodeling"/>
    <property type="evidence" value="ECO:0000314"/>
    <property type="project" value="MGI"/>
</dbReference>
<dbReference type="GO" id="GO:0007219">
    <property type="term" value="P:Notch signaling pathway"/>
    <property type="evidence" value="ECO:0000314"/>
    <property type="project" value="MGI"/>
</dbReference>
<dbReference type="GO" id="GO:0038185">
    <property type="term" value="P:nuclear receptor-mediated bile acid signaling pathway"/>
    <property type="evidence" value="ECO:0000315"/>
    <property type="project" value="BHF-UCL"/>
</dbReference>
<dbReference type="GO" id="GO:1904179">
    <property type="term" value="P:positive regulation of adipose tissue development"/>
    <property type="evidence" value="ECO:0000315"/>
    <property type="project" value="UniProtKB"/>
</dbReference>
<dbReference type="GO" id="GO:2001250">
    <property type="term" value="P:positive regulation of ammonia assimilation cycle"/>
    <property type="evidence" value="ECO:0000315"/>
    <property type="project" value="BHF-UCL"/>
</dbReference>
<dbReference type="GO" id="GO:0045893">
    <property type="term" value="P:positive regulation of DNA-templated transcription"/>
    <property type="evidence" value="ECO:0000314"/>
    <property type="project" value="MGI"/>
</dbReference>
<dbReference type="GO" id="GO:2000213">
    <property type="term" value="P:positive regulation of glutamate metabolic process"/>
    <property type="evidence" value="ECO:0000315"/>
    <property type="project" value="BHF-UCL"/>
</dbReference>
<dbReference type="GO" id="GO:0046628">
    <property type="term" value="P:positive regulation of insulin receptor signaling pathway"/>
    <property type="evidence" value="ECO:0000314"/>
    <property type="project" value="UniProtKB"/>
</dbReference>
<dbReference type="GO" id="GO:0035774">
    <property type="term" value="P:positive regulation of insulin secretion involved in cellular response to glucose stimulus"/>
    <property type="evidence" value="ECO:0000315"/>
    <property type="project" value="UniProtKB"/>
</dbReference>
<dbReference type="GO" id="GO:0032740">
    <property type="term" value="P:positive regulation of interleukin-17 production"/>
    <property type="evidence" value="ECO:0007669"/>
    <property type="project" value="Ensembl"/>
</dbReference>
<dbReference type="GO" id="GO:1905695">
    <property type="term" value="P:positive regulation of phosphatidic acid biosynthetic process"/>
    <property type="evidence" value="ECO:0007669"/>
    <property type="project" value="Ensembl"/>
</dbReference>
<dbReference type="GO" id="GO:0045944">
    <property type="term" value="P:positive regulation of transcription by RNA polymerase II"/>
    <property type="evidence" value="ECO:0000314"/>
    <property type="project" value="MGI"/>
</dbReference>
<dbReference type="GO" id="GO:0010988">
    <property type="term" value="P:regulation of low-density lipoprotein particle clearance"/>
    <property type="evidence" value="ECO:0007669"/>
    <property type="project" value="Ensembl"/>
</dbReference>
<dbReference type="GO" id="GO:0006357">
    <property type="term" value="P:regulation of transcription by RNA polymerase II"/>
    <property type="evidence" value="ECO:0000316"/>
    <property type="project" value="MGI"/>
</dbReference>
<dbReference type="GO" id="GO:0034255">
    <property type="term" value="P:regulation of urea metabolic process"/>
    <property type="evidence" value="ECO:0000315"/>
    <property type="project" value="BHF-UCL"/>
</dbReference>
<dbReference type="GO" id="GO:0034162">
    <property type="term" value="P:toll-like receptor 9 signaling pathway"/>
    <property type="evidence" value="ECO:0000315"/>
    <property type="project" value="UniProtKB"/>
</dbReference>
<dbReference type="GO" id="GO:0006366">
    <property type="term" value="P:transcription by RNA polymerase II"/>
    <property type="evidence" value="ECO:0000314"/>
    <property type="project" value="MGI"/>
</dbReference>
<dbReference type="GO" id="GO:0070328">
    <property type="term" value="P:triglyceride homeostasis"/>
    <property type="evidence" value="ECO:0000314"/>
    <property type="project" value="UniProtKB"/>
</dbReference>
<dbReference type="CDD" id="cd06962">
    <property type="entry name" value="NR_DBD_FXR"/>
    <property type="match status" value="1"/>
</dbReference>
<dbReference type="CDD" id="cd06936">
    <property type="entry name" value="NR_LBD_Fxr"/>
    <property type="match status" value="1"/>
</dbReference>
<dbReference type="FunFam" id="1.10.565.10:FF:000018">
    <property type="entry name" value="Bile acid receptor isoform 4"/>
    <property type="match status" value="1"/>
</dbReference>
<dbReference type="FunFam" id="3.30.50.10:FF:000021">
    <property type="entry name" value="bile acid receptor isoform X2"/>
    <property type="match status" value="1"/>
</dbReference>
<dbReference type="Gene3D" id="3.30.50.10">
    <property type="entry name" value="Erythroid Transcription Factor GATA-1, subunit A"/>
    <property type="match status" value="1"/>
</dbReference>
<dbReference type="Gene3D" id="1.10.565.10">
    <property type="entry name" value="Retinoid X Receptor"/>
    <property type="match status" value="1"/>
</dbReference>
<dbReference type="InterPro" id="IPR035500">
    <property type="entry name" value="NHR-like_dom_sf"/>
</dbReference>
<dbReference type="InterPro" id="IPR044114">
    <property type="entry name" value="NR_LBD_NR1H4"/>
</dbReference>
<dbReference type="InterPro" id="IPR000536">
    <property type="entry name" value="Nucl_hrmn_rcpt_lig-bd"/>
</dbReference>
<dbReference type="InterPro" id="IPR050234">
    <property type="entry name" value="Nuclear_hormone_rcpt_NR1"/>
</dbReference>
<dbReference type="InterPro" id="IPR001723">
    <property type="entry name" value="Nuclear_hrmn_rcpt"/>
</dbReference>
<dbReference type="InterPro" id="IPR001728">
    <property type="entry name" value="ThyrH_rcpt"/>
</dbReference>
<dbReference type="InterPro" id="IPR001628">
    <property type="entry name" value="Znf_hrmn_rcpt"/>
</dbReference>
<dbReference type="InterPro" id="IPR013088">
    <property type="entry name" value="Znf_NHR/GATA"/>
</dbReference>
<dbReference type="PANTHER" id="PTHR24082:SF155">
    <property type="entry name" value="BILE ACID RECEPTOR"/>
    <property type="match status" value="1"/>
</dbReference>
<dbReference type="PANTHER" id="PTHR24082">
    <property type="entry name" value="NUCLEAR HORMONE RECEPTOR"/>
    <property type="match status" value="1"/>
</dbReference>
<dbReference type="Pfam" id="PF00104">
    <property type="entry name" value="Hormone_recep"/>
    <property type="match status" value="1"/>
</dbReference>
<dbReference type="Pfam" id="PF00105">
    <property type="entry name" value="zf-C4"/>
    <property type="match status" value="1"/>
</dbReference>
<dbReference type="PRINTS" id="PR00398">
    <property type="entry name" value="STRDHORMONER"/>
</dbReference>
<dbReference type="PRINTS" id="PR00047">
    <property type="entry name" value="STROIDFINGER"/>
</dbReference>
<dbReference type="PRINTS" id="PR00546">
    <property type="entry name" value="THYROIDHORMR"/>
</dbReference>
<dbReference type="SMART" id="SM00430">
    <property type="entry name" value="HOLI"/>
    <property type="match status" value="1"/>
</dbReference>
<dbReference type="SMART" id="SM00399">
    <property type="entry name" value="ZnF_C4"/>
    <property type="match status" value="1"/>
</dbReference>
<dbReference type="SUPFAM" id="SSF57716">
    <property type="entry name" value="Glucocorticoid receptor-like (DNA-binding domain)"/>
    <property type="match status" value="1"/>
</dbReference>
<dbReference type="SUPFAM" id="SSF48508">
    <property type="entry name" value="Nuclear receptor ligand-binding domain"/>
    <property type="match status" value="1"/>
</dbReference>
<dbReference type="PROSITE" id="PS51843">
    <property type="entry name" value="NR_LBD"/>
    <property type="match status" value="1"/>
</dbReference>
<dbReference type="PROSITE" id="PS00031">
    <property type="entry name" value="NUCLEAR_REC_DBD_1"/>
    <property type="match status" value="1"/>
</dbReference>
<dbReference type="PROSITE" id="PS51030">
    <property type="entry name" value="NUCLEAR_REC_DBD_2"/>
    <property type="match status" value="1"/>
</dbReference>
<feature type="chain" id="PRO_0000053539" description="Bile acid receptor">
    <location>
        <begin position="1"/>
        <end position="488"/>
    </location>
</feature>
<feature type="domain" description="NR LBD" evidence="4">
    <location>
        <begin position="264"/>
        <end position="488"/>
    </location>
</feature>
<feature type="DNA-binding region" description="Nuclear receptor" evidence="3">
    <location>
        <begin position="135"/>
        <end position="210"/>
    </location>
</feature>
<feature type="zinc finger region" description="NR C4-type" evidence="3">
    <location>
        <begin position="138"/>
        <end position="158"/>
    </location>
</feature>
<feature type="zinc finger region" description="NR C4-type" evidence="3">
    <location>
        <begin position="174"/>
        <end position="198"/>
    </location>
</feature>
<feature type="binding site" evidence="2">
    <location>
        <position position="347"/>
    </location>
    <ligand>
        <name>chenodeoxycholate</name>
        <dbReference type="ChEBI" id="CHEBI:36234"/>
        <note>agonist</note>
    </ligand>
</feature>
<feature type="binding site" evidence="2">
    <location>
        <position position="377"/>
    </location>
    <ligand>
        <name>chenodeoxycholate</name>
        <dbReference type="ChEBI" id="CHEBI:36234"/>
        <note>agonist</note>
    </ligand>
</feature>
<feature type="binding site" evidence="2">
    <location>
        <position position="385"/>
    </location>
    <ligand>
        <name>chenodeoxycholate</name>
        <dbReference type="ChEBI" id="CHEBI:36234"/>
        <note>agonist</note>
    </ligand>
</feature>
<feature type="binding site" evidence="2">
    <location>
        <position position="463"/>
    </location>
    <ligand>
        <name>chenodeoxycholate</name>
        <dbReference type="ChEBI" id="CHEBI:36234"/>
        <note>agonist</note>
    </ligand>
</feature>
<feature type="modified residue" description="Phosphoserine; by PKC/PRKCA" evidence="2">
    <location>
        <position position="146"/>
    </location>
</feature>
<feature type="modified residue" description="Phosphoserine; by PKC/PRKCA" evidence="2">
    <location>
        <position position="165"/>
    </location>
</feature>
<feature type="modified residue" description="N6-acetyllysine; by EP300" evidence="2">
    <location>
        <position position="168"/>
    </location>
</feature>
<feature type="modified residue" description="N6-methyllysine; by SETD7" evidence="2">
    <location>
        <position position="221"/>
    </location>
</feature>
<feature type="modified residue" description="N6-acetyllysine; by EP300" evidence="2">
    <location>
        <position position="228"/>
    </location>
</feature>
<feature type="modified residue" description="Phosphothreonine; by PKC/PRKCZ" evidence="2">
    <location>
        <position position="458"/>
    </location>
</feature>
<feature type="cross-link" description="Glycyl lysine isopeptide (Lys-Gly) (interchain with G-Cter in SUMO1)" evidence="2">
    <location>
        <position position="133"/>
    </location>
</feature>
<feature type="cross-link" description="Glycyl lysine isopeptide (Lys-Gly) (interchain with G-Cter in SUMO1)" evidence="2">
    <location>
        <position position="291"/>
    </location>
</feature>
<feature type="splice variant" id="VSP_058157" description="In isoform 3 and isoform 4." evidence="40">
    <original>MVMQFQGLENPIQISLHHSHRLSGFVPEGMSVKPAK</original>
    <variation>MNLIGHSHLQATDEFSLSESLF</variation>
    <location>
        <begin position="1"/>
        <end position="36"/>
    </location>
</feature>
<feature type="splice variant" id="VSP_003666" description="In isoform 2 and isoform 4." evidence="40 41 42">
    <location>
        <begin position="208"/>
        <end position="211"/>
    </location>
</feature>
<feature type="mutagenesis site" description="Increases affinity to CDCA and transcriptional activity in response to CDCA; when associated with I-388." evidence="8">
    <original>K</original>
    <variation>N</variation>
    <location>
        <position position="370"/>
    </location>
</feature>
<feature type="mutagenesis site" description="Increases affinity to CDCA and transcriptional activity in response to CDCA; when associated with N-370." evidence="8">
    <original>V</original>
    <variation>I</variation>
    <location>
        <position position="388"/>
    </location>
</feature>
<feature type="sequence conflict" description="In Ref. 1; AAC53066 and 3; AAH15261." evidence="43" ref="1 3">
    <original>E</original>
    <variation>D</variation>
    <location>
        <position position="28"/>
    </location>
</feature>
<feature type="sequence conflict" description="In Ref. 1; AAC53065/AAC53066/AAC52978 and 3; AAH15261." evidence="43" ref="1 3">
    <original>K</original>
    <variation>R</variation>
    <location>
        <position position="199"/>
    </location>
</feature>
<feature type="sequence conflict" description="In Ref. 1; AAC53065/AAC53066/AAC52978 and 3; AAH15261." evidence="43" ref="1 3">
    <original>A</original>
    <variation>V</variation>
    <location>
        <position position="235"/>
    </location>
</feature>
<gene>
    <name type="primary">Nr1h4</name>
    <name type="synonym">Bar</name>
    <name type="synonym">Fxr</name>
    <name type="synonym">Rip14</name>
</gene>
<keyword id="KW-0007">Acetylation</keyword>
<keyword id="KW-0010">Activator</keyword>
<keyword id="KW-0877">Alternative promoter usage</keyword>
<keyword id="KW-0025">Alternative splicing</keyword>
<keyword id="KW-0238">DNA-binding</keyword>
<keyword id="KW-0391">Immunity</keyword>
<keyword id="KW-0395">Inflammatory response</keyword>
<keyword id="KW-0399">Innate immunity</keyword>
<keyword id="KW-1017">Isopeptide bond</keyword>
<keyword id="KW-0479">Metal-binding</keyword>
<keyword id="KW-0488">Methylation</keyword>
<keyword id="KW-0539">Nucleus</keyword>
<keyword id="KW-0597">Phosphoprotein</keyword>
<keyword id="KW-0675">Receptor</keyword>
<keyword id="KW-1185">Reference proteome</keyword>
<keyword id="KW-0678">Repressor</keyword>
<keyword id="KW-0804">Transcription</keyword>
<keyword id="KW-0805">Transcription regulation</keyword>
<keyword id="KW-0043">Tumor suppressor</keyword>
<keyword id="KW-0832">Ubl conjugation</keyword>
<keyword id="KW-0862">Zinc</keyword>
<keyword id="KW-0863">Zinc-finger</keyword>